<name>STML2_RAT</name>
<sequence>MLARAARGTGALLLRGSVQASGRIPRRASSGLPRNTVILFVPQQEAWVVERMGRFHRILEPGLNVLIPVLDRIRYVQSLKEIVINVPEQSAVTLDNVTLQIDGVLYLRIMDPYKASYGVEDPEYAVTQLAQTTMRSELGKLSLDKVFRERESLNANIVDAINQAADCWGIRCLRYEIKDIHVPPRVKESMQMQVEAERRKRATVLESEGTRESAINVAEGKKQAQILASEAEKAEQINQAAGEASAVLAKAKAKAEAIRILAGALTQHNGDAAASLTVAEQYVSAFSKLAKDSNTVLLPSNPSDVTSMVAQAMGVYGALTKAPVPGAQNSSEARRDVQTTDTSIEELGRVKLS</sequence>
<feature type="transit peptide" description="Mitochondrion" evidence="4">
    <location>
        <begin position="1"/>
        <end position="28"/>
    </location>
</feature>
<feature type="chain" id="PRO_0000288494" description="Stomatin-like protein 2, mitochondrial">
    <location>
        <begin position="29"/>
        <end position="353"/>
    </location>
</feature>
<feature type="region of interest" description="Disordered" evidence="5">
    <location>
        <begin position="324"/>
        <end position="353"/>
    </location>
</feature>
<feature type="coiled-coil region" evidence="4">
    <location>
        <begin position="215"/>
        <end position="252"/>
    </location>
</feature>
<feature type="modified residue" description="Phosphoserine; by PKC/PRKCZ" evidence="3">
    <location>
        <position position="17"/>
    </location>
</feature>
<feature type="modified residue" description="Phosphotyrosine" evidence="3">
    <location>
        <position position="124"/>
    </location>
</feature>
<feature type="modified residue" description="N6-acetyllysine; alternate" evidence="3">
    <location>
        <position position="145"/>
    </location>
</feature>
<feature type="modified residue" description="N6-succinyllysine; alternate" evidence="2">
    <location>
        <position position="145"/>
    </location>
</feature>
<feature type="modified residue" description="N6-acetyllysine" evidence="3">
    <location>
        <position position="233"/>
    </location>
</feature>
<feature type="modified residue" description="Phosphoserine" evidence="3">
    <location>
        <position position="330"/>
    </location>
</feature>
<reference key="1">
    <citation type="journal article" date="2004" name="Genome Res.">
        <title>The status, quality, and expansion of the NIH full-length cDNA project: the Mammalian Gene Collection (MGC).</title>
        <authorList>
            <consortium name="The MGC Project Team"/>
        </authorList>
    </citation>
    <scope>NUCLEOTIDE SEQUENCE [LARGE SCALE MRNA]</scope>
    <source>
        <tissue>Thymus</tissue>
    </source>
</reference>
<reference key="2">
    <citation type="submission" date="2007-04" db="UniProtKB">
        <authorList>
            <person name="Lubec G."/>
            <person name="Chen W.-Q."/>
        </authorList>
    </citation>
    <scope>PROTEIN SEQUENCE OF 58-72; 202-221 AND 322-334</scope>
    <scope>IDENTIFICATION BY MASS SPECTROMETRY</scope>
    <source>
        <strain>Sprague-Dawley</strain>
        <tissue>Hippocampus</tissue>
    </source>
</reference>
<gene>
    <name type="primary">Stoml2</name>
</gene>
<comment type="function">
    <text evidence="1">Mitochondrial protein that probably regulates the biogenesis and the activity of mitochondria. Stimulates cardiolipin biosynthesis, binds cardiolipin-enriched membranes where it recruits and stabilizes some proteins including prohibitin and may therefore act in the organization of functional microdomains in mitochondrial membranes. Through regulation of the mitochondrial function may play a role into several biological processes including cell migration, cell proliferation, T-cell activation, calcium homeostasis and cellular response to stress. May play a role in calcium homeostasis through negative regulation of calcium efflux from mitochondria. Required for mitochondrial hyperfusion a pro-survival cellular response to stress which results in increased ATP production by mitochondria. May also regulate the organization of functional domains at the plasma membrane and play a role in T-cell activation through association with the T-cell receptor signaling complex and its regulation (By similarity).</text>
</comment>
<comment type="subunit">
    <text evidence="1">Forms homooligomers. Interacts with MFN2; may form heterooligomers. Interacts with PHB1 and PHB2; recruits them to cardiolipin-enriched mitochondrial membranes and stabilizes them. Interacts with CACNA2D2 (By similarity).</text>
</comment>
<comment type="subcellular location">
    <subcellularLocation>
        <location evidence="3">Cell membrane</location>
        <topology evidence="3">Peripheral membrane protein</topology>
    </subcellularLocation>
    <subcellularLocation>
        <location evidence="3">Mitochondrion</location>
    </subcellularLocation>
    <subcellularLocation>
        <location evidence="3">Mitochondrion inner membrane</location>
        <topology evidence="3">Lipid-anchor</topology>
    </subcellularLocation>
    <subcellularLocation>
        <location evidence="3">Mitochondrion intermembrane space</location>
    </subcellularLocation>
    <subcellularLocation>
        <location evidence="3">Membrane raft</location>
    </subcellularLocation>
    <subcellularLocation>
        <location evidence="3">Cytoplasm</location>
        <location evidence="3">Cytoskeleton</location>
    </subcellularLocation>
    <text evidence="3">Behaves as an integral membrane protein of the mitochondrion despite the absence of a detectable transmembrane domain. Also associates with the actin cytoskeleton and membrane rafts in activated T-cells. A minor pool is associated with the plasma membrane and is enriched at the immunological synapse in activated T-cells.</text>
</comment>
<comment type="similarity">
    <text evidence="6">Belongs to the band 7/mec-2 family.</text>
</comment>
<accession>Q4FZT0</accession>
<keyword id="KW-0007">Acetylation</keyword>
<keyword id="KW-1003">Cell membrane</keyword>
<keyword id="KW-0175">Coiled coil</keyword>
<keyword id="KW-0963">Cytoplasm</keyword>
<keyword id="KW-0206">Cytoskeleton</keyword>
<keyword id="KW-0903">Direct protein sequencing</keyword>
<keyword id="KW-0446">Lipid-binding</keyword>
<keyword id="KW-0449">Lipoprotein</keyword>
<keyword id="KW-0472">Membrane</keyword>
<keyword id="KW-0496">Mitochondrion</keyword>
<keyword id="KW-0999">Mitochondrion inner membrane</keyword>
<keyword id="KW-0597">Phosphoprotein</keyword>
<keyword id="KW-1185">Reference proteome</keyword>
<keyword id="KW-0809">Transit peptide</keyword>
<protein>
    <recommendedName>
        <fullName>Stomatin-like protein 2, mitochondrial</fullName>
        <shortName>SLP-2</shortName>
    </recommendedName>
</protein>
<proteinExistence type="evidence at protein level"/>
<dbReference type="EMBL" id="BC099164">
    <property type="protein sequence ID" value="AAH99164.1"/>
    <property type="molecule type" value="mRNA"/>
</dbReference>
<dbReference type="RefSeq" id="NP_001026816.1">
    <property type="nucleotide sequence ID" value="NM_001031646.1"/>
</dbReference>
<dbReference type="SMR" id="Q4FZT0"/>
<dbReference type="BioGRID" id="255804">
    <property type="interactions" value="4"/>
</dbReference>
<dbReference type="FunCoup" id="Q4FZT0">
    <property type="interactions" value="3578"/>
</dbReference>
<dbReference type="IntAct" id="Q4FZT0">
    <property type="interactions" value="2"/>
</dbReference>
<dbReference type="MINT" id="Q4FZT0"/>
<dbReference type="STRING" id="10116.ENSRNOP00000013151"/>
<dbReference type="GlyGen" id="Q4FZT0">
    <property type="glycosylation" value="1 site, 1 O-linked glycan (1 site)"/>
</dbReference>
<dbReference type="iPTMnet" id="Q4FZT0"/>
<dbReference type="PhosphoSitePlus" id="Q4FZT0"/>
<dbReference type="SwissPalm" id="Q4FZT0"/>
<dbReference type="jPOST" id="Q4FZT0"/>
<dbReference type="PaxDb" id="10116-ENSRNOP00000013151"/>
<dbReference type="Ensembl" id="ENSRNOT00000013151.7">
    <property type="protein sequence ID" value="ENSRNOP00000013151.3"/>
    <property type="gene ID" value="ENSRNOG00000009535.7"/>
</dbReference>
<dbReference type="GeneID" id="298203"/>
<dbReference type="KEGG" id="rno:298203"/>
<dbReference type="UCSC" id="RGD:1308285">
    <property type="organism name" value="rat"/>
</dbReference>
<dbReference type="AGR" id="RGD:1308285"/>
<dbReference type="CTD" id="30968"/>
<dbReference type="RGD" id="1308285">
    <property type="gene designation" value="Stoml2"/>
</dbReference>
<dbReference type="eggNOG" id="KOG2620">
    <property type="taxonomic scope" value="Eukaryota"/>
</dbReference>
<dbReference type="GeneTree" id="ENSGT01030000234614"/>
<dbReference type="HOGENOM" id="CLU_024949_1_0_1"/>
<dbReference type="InParanoid" id="Q4FZT0"/>
<dbReference type="OMA" id="YLQMLPK"/>
<dbReference type="OrthoDB" id="434619at2759"/>
<dbReference type="PhylomeDB" id="Q4FZT0"/>
<dbReference type="TreeFam" id="TF105750"/>
<dbReference type="Reactome" id="R-RNO-8949664">
    <property type="pathway name" value="Processing of SMDT1"/>
</dbReference>
<dbReference type="Reactome" id="R-RNO-9840373">
    <property type="pathway name" value="Cellular response to mitochondrial stress"/>
</dbReference>
<dbReference type="PRO" id="PR:Q4FZT0"/>
<dbReference type="Proteomes" id="UP000002494">
    <property type="component" value="Chromosome 5"/>
</dbReference>
<dbReference type="Bgee" id="ENSRNOG00000009535">
    <property type="expression patterns" value="Expressed in ovary and 20 other cell types or tissues"/>
</dbReference>
<dbReference type="GO" id="GO:0015629">
    <property type="term" value="C:actin cytoskeleton"/>
    <property type="evidence" value="ECO:0000250"/>
    <property type="project" value="UniProtKB"/>
</dbReference>
<dbReference type="GO" id="GO:0001772">
    <property type="term" value="C:immunological synapse"/>
    <property type="evidence" value="ECO:0000250"/>
    <property type="project" value="UniProtKB"/>
</dbReference>
<dbReference type="GO" id="GO:0045121">
    <property type="term" value="C:membrane raft"/>
    <property type="evidence" value="ECO:0000250"/>
    <property type="project" value="UniProtKB"/>
</dbReference>
<dbReference type="GO" id="GO:0005743">
    <property type="term" value="C:mitochondrial inner membrane"/>
    <property type="evidence" value="ECO:0000250"/>
    <property type="project" value="UniProtKB"/>
</dbReference>
<dbReference type="GO" id="GO:0005758">
    <property type="term" value="C:mitochondrial intermembrane space"/>
    <property type="evidence" value="ECO:0000250"/>
    <property type="project" value="UniProtKB"/>
</dbReference>
<dbReference type="GO" id="GO:0005739">
    <property type="term" value="C:mitochondrion"/>
    <property type="evidence" value="ECO:0000266"/>
    <property type="project" value="RGD"/>
</dbReference>
<dbReference type="GO" id="GO:0005886">
    <property type="term" value="C:plasma membrane"/>
    <property type="evidence" value="ECO:0000250"/>
    <property type="project" value="UniProtKB"/>
</dbReference>
<dbReference type="GO" id="GO:1901612">
    <property type="term" value="F:cardiolipin binding"/>
    <property type="evidence" value="ECO:0000250"/>
    <property type="project" value="UniProtKB"/>
</dbReference>
<dbReference type="GO" id="GO:0051020">
    <property type="term" value="F:GTPase binding"/>
    <property type="evidence" value="ECO:0000266"/>
    <property type="project" value="RGD"/>
</dbReference>
<dbReference type="GO" id="GO:0042608">
    <property type="term" value="F:T cell receptor binding"/>
    <property type="evidence" value="ECO:0000250"/>
    <property type="project" value="UniProtKB"/>
</dbReference>
<dbReference type="GO" id="GO:0035710">
    <property type="term" value="P:CD4-positive, alpha-beta T cell activation"/>
    <property type="evidence" value="ECO:0000250"/>
    <property type="project" value="UniProtKB"/>
</dbReference>
<dbReference type="GO" id="GO:0006874">
    <property type="term" value="P:intracellular calcium ion homeostasis"/>
    <property type="evidence" value="ECO:0000250"/>
    <property type="project" value="UniProtKB"/>
</dbReference>
<dbReference type="GO" id="GO:0010876">
    <property type="term" value="P:lipid localization"/>
    <property type="evidence" value="ECO:0000250"/>
    <property type="project" value="UniProtKB"/>
</dbReference>
<dbReference type="GO" id="GO:0034982">
    <property type="term" value="P:mitochondrial protein processing"/>
    <property type="evidence" value="ECO:0000250"/>
    <property type="project" value="UniProtKB"/>
</dbReference>
<dbReference type="GO" id="GO:0007005">
    <property type="term" value="P:mitochondrion organization"/>
    <property type="evidence" value="ECO:0000250"/>
    <property type="project" value="UniProtKB"/>
</dbReference>
<dbReference type="GO" id="GO:0032743">
    <property type="term" value="P:positive regulation of interleukin-2 production"/>
    <property type="evidence" value="ECO:0000250"/>
    <property type="project" value="UniProtKB"/>
</dbReference>
<dbReference type="GO" id="GO:0051259">
    <property type="term" value="P:protein complex oligomerization"/>
    <property type="evidence" value="ECO:0000250"/>
    <property type="project" value="UniProtKB"/>
</dbReference>
<dbReference type="GO" id="GO:0042776">
    <property type="term" value="P:proton motive force-driven mitochondrial ATP synthesis"/>
    <property type="evidence" value="ECO:0000266"/>
    <property type="project" value="RGD"/>
</dbReference>
<dbReference type="GO" id="GO:1990046">
    <property type="term" value="P:stress-induced mitochondrial fusion"/>
    <property type="evidence" value="ECO:0000250"/>
    <property type="project" value="UniProtKB"/>
</dbReference>
<dbReference type="GO" id="GO:0050852">
    <property type="term" value="P:T cell receptor signaling pathway"/>
    <property type="evidence" value="ECO:0000250"/>
    <property type="project" value="UniProtKB"/>
</dbReference>
<dbReference type="CDD" id="cd08829">
    <property type="entry name" value="SPFH_paraslipin"/>
    <property type="match status" value="1"/>
</dbReference>
<dbReference type="FunFam" id="3.30.479.30:FF:000008">
    <property type="entry name" value="Stomatin-like protein 2, mitochondrial"/>
    <property type="match status" value="1"/>
</dbReference>
<dbReference type="Gene3D" id="3.30.479.30">
    <property type="entry name" value="Band 7 domain"/>
    <property type="match status" value="1"/>
</dbReference>
<dbReference type="InterPro" id="IPR050710">
    <property type="entry name" value="Band7/mec-2_domain"/>
</dbReference>
<dbReference type="InterPro" id="IPR001107">
    <property type="entry name" value="Band_7"/>
</dbReference>
<dbReference type="InterPro" id="IPR036013">
    <property type="entry name" value="Band_7/SPFH_dom_sf"/>
</dbReference>
<dbReference type="InterPro" id="IPR032435">
    <property type="entry name" value="STML2-like_C"/>
</dbReference>
<dbReference type="InterPro" id="IPR001972">
    <property type="entry name" value="Stomatin_HflK_fam"/>
</dbReference>
<dbReference type="PANTHER" id="PTHR43327">
    <property type="entry name" value="STOMATIN-LIKE PROTEIN 2, MITOCHONDRIAL"/>
    <property type="match status" value="1"/>
</dbReference>
<dbReference type="PANTHER" id="PTHR43327:SF10">
    <property type="entry name" value="STOMATIN-LIKE PROTEIN 2, MITOCHONDRIAL"/>
    <property type="match status" value="1"/>
</dbReference>
<dbReference type="Pfam" id="PF01145">
    <property type="entry name" value="Band_7"/>
    <property type="match status" value="1"/>
</dbReference>
<dbReference type="Pfam" id="PF16200">
    <property type="entry name" value="Band_7_C"/>
    <property type="match status" value="1"/>
</dbReference>
<dbReference type="PRINTS" id="PR00721">
    <property type="entry name" value="STOMATIN"/>
</dbReference>
<dbReference type="SMART" id="SM00244">
    <property type="entry name" value="PHB"/>
    <property type="match status" value="1"/>
</dbReference>
<dbReference type="SUPFAM" id="SSF117892">
    <property type="entry name" value="Band 7/SPFH domain"/>
    <property type="match status" value="1"/>
</dbReference>
<organism>
    <name type="scientific">Rattus norvegicus</name>
    <name type="common">Rat</name>
    <dbReference type="NCBI Taxonomy" id="10116"/>
    <lineage>
        <taxon>Eukaryota</taxon>
        <taxon>Metazoa</taxon>
        <taxon>Chordata</taxon>
        <taxon>Craniata</taxon>
        <taxon>Vertebrata</taxon>
        <taxon>Euteleostomi</taxon>
        <taxon>Mammalia</taxon>
        <taxon>Eutheria</taxon>
        <taxon>Euarchontoglires</taxon>
        <taxon>Glires</taxon>
        <taxon>Rodentia</taxon>
        <taxon>Myomorpha</taxon>
        <taxon>Muroidea</taxon>
        <taxon>Muridae</taxon>
        <taxon>Murinae</taxon>
        <taxon>Rattus</taxon>
    </lineage>
</organism>
<evidence type="ECO:0000250" key="1"/>
<evidence type="ECO:0000250" key="2">
    <source>
        <dbReference type="UniProtKB" id="Q99JB2"/>
    </source>
</evidence>
<evidence type="ECO:0000250" key="3">
    <source>
        <dbReference type="UniProtKB" id="Q9UJZ1"/>
    </source>
</evidence>
<evidence type="ECO:0000255" key="4"/>
<evidence type="ECO:0000256" key="5">
    <source>
        <dbReference type="SAM" id="MobiDB-lite"/>
    </source>
</evidence>
<evidence type="ECO:0000305" key="6"/>